<keyword id="KW-0025">Alternative splicing</keyword>
<keyword id="KW-0175">Coiled coil</keyword>
<keyword id="KW-0256">Endoplasmic reticulum</keyword>
<keyword id="KW-0391">Immunity</keyword>
<keyword id="KW-0399">Innate immunity</keyword>
<keyword id="KW-0472">Membrane</keyword>
<keyword id="KW-0479">Metal-binding</keyword>
<keyword id="KW-1267">Proteomics identification</keyword>
<keyword id="KW-1185">Reference proteome</keyword>
<keyword id="KW-0808">Transferase</keyword>
<keyword id="KW-0812">Transmembrane</keyword>
<keyword id="KW-1133">Transmembrane helix</keyword>
<keyword id="KW-0832">Ubl conjugation</keyword>
<keyword id="KW-0833">Ubl conjugation pathway</keyword>
<keyword id="KW-0862">Zinc</keyword>
<keyword id="KW-0863">Zinc-finger</keyword>
<sequence length="407" mass="46988">MELLEEDLTCPICCSLFDDPRVLPCSHNFCKKCLEGILEGSVRNSLWRPAPFKCPTCRKETSATGINSLQVNYSLKGIVEKYNKIKISPKMPVCKGHLGQPLNIFCLTDMQLICGICATRGEHTKHVFCSIEDAYAQERDAFESLFQSFETWRRGDALSRLDTLETSKRKSLQLLTKDSDKVKEFFEKLQHTLDQKKNEILSDFETMKLAVMQAYDPEINKLNTILQEQRMAFNIAEAFKDVSEPIVFLQQMQEFREKIKVIKETPLPPSNLPASPLMKNFDTSQWEDIKLVDVDKLSLPQDTGTFISKIPWSFYKLFLLILLLGLVIVFGPTMFLEWSLFDDLATWKGCLSNFSSYLTKTADFIEQSVFYWEQVTDGFFIFNERFKNFTLVVLNNVAEFVCKYKLL</sequence>
<comment type="function">
    <text evidence="6 7 8 9 10 11">Endoplasmic reticulum (ER) membrane anchored E3 ligase involved in the retrotranslocation and turnover of membrane and secretory proteins from the ER through a set of processes named ER-associated degradation (ERAD). This process acts on misfolded proteins as well as in the regulated degradation of correctly folded proteins. Enhances ionizing radiation-induced p53/TP53 stability and apoptosis via ubiquitinating MDM2 and AKT1 and decreasing AKT1 kinase activity through MDM2 and AKT1 proteasomal degradation. Regulates ER stress-induced autophagy, and may act as a tumor suppressor (PubMed:22178386). Also plays a role in innate immune response by stimulating NF-kappa-B activity in the TLR2 signaling pathway. Ubiquitinates TRAF6 via the 'Lys-29'-linked polyubiquitination chain resulting in NF-kappa-B activation (PubMed:28087809). Participates as well in T-cell receptor-mediated NF-kappa-B activation (PubMed:25088585). In the presence of TNF, modulates the IKK complex by regulating IKBKG/NEMO ubiquitination leading to the repression of NF-kappa-B (PubMed:25152375).</text>
</comment>
<comment type="catalytic activity">
    <reaction>
        <text>S-ubiquitinyl-[E2 ubiquitin-conjugating enzyme]-L-cysteine + [acceptor protein]-L-lysine = [E2 ubiquitin-conjugating enzyme]-L-cysteine + N(6)-ubiquitinyl-[acceptor protein]-L-lysine.</text>
        <dbReference type="EC" id="2.3.2.27"/>
    </reaction>
</comment>
<comment type="pathway">
    <text>Protein modification; protein ubiquitination.</text>
</comment>
<comment type="subunit">
    <text evidence="6 7 8 11">Interacts (via C-terminal domain) with VCP. Interacts with AKT1; the interaction ubiquitinates AKT1 and leads to its proteasomal degradation. Interacts with MDM2; the interaction ubiquitinates AKT1 and leads to its proteasomal degradation. Interacts with p62/SQSTM1. Interacts with TRAF6 (PubMed:28087809). Interacts with IKBKG/NEMO (PubMed:25152375).</text>
</comment>
<comment type="interaction">
    <interactant intactId="EBI-9867345">
        <id>O60858</id>
    </interactant>
    <interactant intactId="EBI-10172181">
        <id>Q53SE7</id>
        <label>FLJ13057</label>
    </interactant>
    <organismsDiffer>false</organismsDiffer>
    <experiments>3</experiments>
</comment>
<comment type="subcellular location">
    <subcellularLocation>
        <location evidence="6 7 8 10">Endoplasmic reticulum membrane</location>
        <topology evidence="6 7 8">Single-pass membrane protein</topology>
    </subcellularLocation>
    <text>Concentrates and colocalizes with p62/SQSTM1 and ZFYVE1 at the perinuclear endoplasmic reticulum.</text>
</comment>
<comment type="alternative products">
    <event type="alternative splicing"/>
    <isoform>
        <id>O60858-1</id>
        <name>1</name>
        <name>Alpha</name>
        <sequence type="displayed"/>
    </isoform>
    <isoform>
        <id>O60858-2</id>
        <name>2</name>
        <name>Beta</name>
        <sequence type="described" ref="VSP_005746 VSP_005747"/>
    </isoform>
    <isoform>
        <id>O60858-3</id>
        <name>3</name>
        <sequence type="described" ref="VSP_038142"/>
    </isoform>
</comment>
<comment type="domain">
    <text>The coiled-coil domain is required for the induction of autophagy during endoplasmic reticulum (ER) stress.</text>
</comment>
<comment type="domain">
    <text>The RING-type zinc finger is required for auto-polyubiquitination.</text>
</comment>
<comment type="domain">
    <text>The C-terminal domain transmembrane domain is indispensable for the localization to the ER.</text>
</comment>
<comment type="PTM">
    <text evidence="6 7 8">Auto-ubiquitinated; requires the RING-type zinc finger. Auto-polyubiquitination leads to proteasomal degradation.</text>
</comment>
<comment type="miscellaneous">
    <text>Located on chromosome 13 within the minimal deletion region for B-cell chronic lymphocytic leukemia.</text>
</comment>
<comment type="similarity">
    <text evidence="16">Belongs to the TRIM/RBCC family.</text>
</comment>
<protein>
    <recommendedName>
        <fullName>E3 ubiquitin-protein ligase TRIM13</fullName>
        <ecNumber>2.3.2.27</ecNumber>
    </recommendedName>
    <alternativeName>
        <fullName>B-cell chronic lymphocytic leukemia tumor suppressor Leu5</fullName>
    </alternativeName>
    <alternativeName>
        <fullName>Leukemia-associated protein 5</fullName>
    </alternativeName>
    <alternativeName>
        <fullName>Putative tumor suppressor RFP2</fullName>
    </alternativeName>
    <alternativeName>
        <fullName>RING finger protein 77</fullName>
    </alternativeName>
    <alternativeName>
        <fullName evidence="16">RING-type E3 ubiquitin transferase TRIM13</fullName>
    </alternativeName>
    <alternativeName>
        <fullName>Ret finger protein 2</fullName>
    </alternativeName>
    <alternativeName>
        <fullName>Tripartite motif-containing protein 13</fullName>
    </alternativeName>
</protein>
<accession>O60858</accession>
<accession>B2RB49</accession>
<accession>Q5UBW0</accession>
<accession>Q5W0U8</accession>
<accession>Q5W0U9</accession>
<accession>Q9BQ47</accession>
<accession>Q9C021</accession>
<evidence type="ECO:0000255" key="1"/>
<evidence type="ECO:0000255" key="2">
    <source>
        <dbReference type="PROSITE-ProRule" id="PRU00024"/>
    </source>
</evidence>
<evidence type="ECO:0000255" key="3">
    <source>
        <dbReference type="PROSITE-ProRule" id="PRU00175"/>
    </source>
</evidence>
<evidence type="ECO:0000269" key="4">
    <source>
    </source>
</evidence>
<evidence type="ECO:0000269" key="5">
    <source>
    </source>
</evidence>
<evidence type="ECO:0000269" key="6">
    <source>
    </source>
</evidence>
<evidence type="ECO:0000269" key="7">
    <source>
    </source>
</evidence>
<evidence type="ECO:0000269" key="8">
    <source>
    </source>
</evidence>
<evidence type="ECO:0000269" key="9">
    <source>
    </source>
</evidence>
<evidence type="ECO:0000269" key="10">
    <source>
    </source>
</evidence>
<evidence type="ECO:0000269" key="11">
    <source>
    </source>
</evidence>
<evidence type="ECO:0000269" key="12">
    <source>
    </source>
</evidence>
<evidence type="ECO:0000269" key="13">
    <source ref="5"/>
</evidence>
<evidence type="ECO:0000303" key="14">
    <source>
    </source>
</evidence>
<evidence type="ECO:0000303" key="15">
    <source ref="7"/>
</evidence>
<evidence type="ECO:0000305" key="16"/>
<organism>
    <name type="scientific">Homo sapiens</name>
    <name type="common">Human</name>
    <dbReference type="NCBI Taxonomy" id="9606"/>
    <lineage>
        <taxon>Eukaryota</taxon>
        <taxon>Metazoa</taxon>
        <taxon>Chordata</taxon>
        <taxon>Craniata</taxon>
        <taxon>Vertebrata</taxon>
        <taxon>Euteleostomi</taxon>
        <taxon>Mammalia</taxon>
        <taxon>Eutheria</taxon>
        <taxon>Euarchontoglires</taxon>
        <taxon>Primates</taxon>
        <taxon>Haplorrhini</taxon>
        <taxon>Catarrhini</taxon>
        <taxon>Hominidae</taxon>
        <taxon>Homo</taxon>
    </lineage>
</organism>
<gene>
    <name type="primary">TRIM13</name>
    <name type="synonym">LEU5</name>
    <name type="synonym">RFP2</name>
    <name type="synonym">RNF77</name>
</gene>
<reference key="1">
    <citation type="journal article" date="1998" name="FEBS Lett.">
        <title>A cosmid and cDNA fine physical map of a human chromosome 13q14 region frequently lost in B-cell chronic lymphocytic leukemia and identification of a new putative tumor suppressor gene, Leu5.</title>
        <authorList>
            <person name="Kapanadze B."/>
            <person name="Kashuba V."/>
            <person name="Baranova A."/>
            <person name="Rasool O."/>
            <person name="van Everdink W.J."/>
            <person name="Liu Y."/>
            <person name="Syomov A."/>
            <person name="Corcoran M."/>
            <person name="Poltaraus A."/>
            <person name="Brodyansky V."/>
            <person name="Syomova N."/>
            <person name="Kazakov A."/>
            <person name="Ibbotson R."/>
            <person name="van den Berg A."/>
            <person name="Gizatullin R."/>
            <person name="Fedorova L."/>
            <person name="Sulimova G."/>
            <person name="Zelenin A."/>
            <person name="Deaven L."/>
            <person name="Lehrach H."/>
            <person name="Grander D."/>
            <person name="Buys C."/>
            <person name="Oscier D."/>
            <person name="Zabarovsky E.R."/>
            <person name="Einhorn S."/>
            <person name="Yankovsky N."/>
        </authorList>
    </citation>
    <scope>NUCLEOTIDE SEQUENCE [MRNA] (ISOFORM 1)</scope>
    <scope>VARIANT THR-355</scope>
    <source>
        <tissue>Leukemia</tissue>
    </source>
</reference>
<reference key="2">
    <citation type="journal article" date="2001" name="Blood">
        <title>Nucleotide sequence, transcription map, and mutation analysis of the 13q14 chromosomal region deleted in B-cell chronic lymphocytic leukemia.</title>
        <authorList>
            <person name="Migliazza A."/>
            <person name="Bosch F."/>
            <person name="Komatsu H."/>
            <person name="Cayanis E."/>
            <person name="Martinotti S."/>
            <person name="Toniato E."/>
            <person name="Guccione E."/>
            <person name="Qu X."/>
            <person name="Chien M."/>
            <person name="Murty V.V."/>
            <person name="Gaidano G."/>
            <person name="Inghirami G."/>
            <person name="Zhang P."/>
            <person name="Fischer S."/>
            <person name="Kalachikov S.M."/>
            <person name="Russo J."/>
            <person name="Edelman I."/>
            <person name="Efstratiadis A."/>
            <person name="Dalla-Favera R."/>
        </authorList>
    </citation>
    <scope>NUCLEOTIDE SEQUENCE [GENOMIC DNA]</scope>
    <scope>ALTERNATIVE SPLICING (ISOFORM 1)</scope>
</reference>
<reference key="3">
    <citation type="journal article" date="2001" name="EMBO J.">
        <title>The tripartite motif family identifies cell compartments.</title>
        <authorList>
            <person name="Reymond A."/>
            <person name="Meroni G."/>
            <person name="Fantozzi A."/>
            <person name="Merla G."/>
            <person name="Cairo S."/>
            <person name="Luzi L."/>
            <person name="Riganelli D."/>
            <person name="Zanaria E."/>
            <person name="Messali S."/>
            <person name="Cainarca S."/>
            <person name="Guffanti A."/>
            <person name="Minucci S."/>
            <person name="Pelicci P.G."/>
            <person name="Ballabio A."/>
        </authorList>
    </citation>
    <scope>NUCLEOTIDE SEQUENCE [MRNA] (ISOFORMS 1 AND 2)</scope>
    <scope>VARIANT THR-355</scope>
</reference>
<reference key="4">
    <citation type="journal article" date="2003" name="Cancer Genet. Cytogenet.">
        <title>RFP2, c13ORF1, and FAM10A4 are the most likely tumor suppressor gene candidates for B-cell chronic lymphocytic leukemia.</title>
        <authorList>
            <person name="van Everdink W.J."/>
            <person name="Baranova A."/>
            <person name="Lummen C."/>
            <person name="Tyazhelova T."/>
            <person name="Looman M.W."/>
            <person name="Ivanov D."/>
            <person name="Verlind E."/>
            <person name="Pestova A."/>
            <person name="Faber H."/>
            <person name="van der Veen A.Y."/>
            <person name="Yankovsky N."/>
            <person name="Vellenga E."/>
            <person name="Buys C.H."/>
        </authorList>
    </citation>
    <scope>NUCLEOTIDE SEQUENCE [MRNA] (ISOFORM 1)</scope>
</reference>
<reference key="5">
    <citation type="submission" date="2000-03" db="EMBL/GenBank/DDBJ databases">
        <title>RFP2 putative tumor suppressor gene: genomic organization, multiple mRNA isoforms and evaluation as a B-cell chronic lymphocytic leukaemia candidate.</title>
        <authorList>
            <person name="Baranova A.V."/>
            <person name="Sangfelt O."/>
            <person name="Ivanov D.V."/>
            <person name="Borodina T.A."/>
            <person name="Yankovsky N.K."/>
        </authorList>
    </citation>
    <scope>NUCLEOTIDE SEQUENCE [GENOMIC DNA / MRNA] (ISOFORM 1)</scope>
    <scope>VARIANT THR-355</scope>
</reference>
<reference key="6">
    <citation type="submission" date="2003-10" db="EMBL/GenBank/DDBJ databases">
        <authorList>
            <person name="Corcoran M.M."/>
            <person name="Hammarsund M."/>
            <person name="Grander D."/>
            <person name="Oscier D."/>
            <person name="Kapanadze B."/>
            <person name="Einhorn S."/>
            <person name="Sangfelt O."/>
        </authorList>
    </citation>
    <scope>NUCLEOTIDE SEQUENCE [MRNA] (ISOFORM 1)</scope>
</reference>
<reference key="7">
    <citation type="submission" date="2004-09" db="EMBL/GenBank/DDBJ databases">
        <title>Alternative isoform of candidate tumor suppressor RFP2.</title>
        <authorList>
            <person name="Corcoran M.M."/>
            <person name="Lerner M."/>
            <person name="Sangfelt O."/>
        </authorList>
    </citation>
    <scope>NUCLEOTIDE SEQUENCE [MRNA] (ISOFORM 3)</scope>
</reference>
<reference key="8">
    <citation type="journal article" date="2004" name="Nat. Genet.">
        <title>Complete sequencing and characterization of 21,243 full-length human cDNAs.</title>
        <authorList>
            <person name="Ota T."/>
            <person name="Suzuki Y."/>
            <person name="Nishikawa T."/>
            <person name="Otsuki T."/>
            <person name="Sugiyama T."/>
            <person name="Irie R."/>
            <person name="Wakamatsu A."/>
            <person name="Hayashi K."/>
            <person name="Sato H."/>
            <person name="Nagai K."/>
            <person name="Kimura K."/>
            <person name="Makita H."/>
            <person name="Sekine M."/>
            <person name="Obayashi M."/>
            <person name="Nishi T."/>
            <person name="Shibahara T."/>
            <person name="Tanaka T."/>
            <person name="Ishii S."/>
            <person name="Yamamoto J."/>
            <person name="Saito K."/>
            <person name="Kawai Y."/>
            <person name="Isono Y."/>
            <person name="Nakamura Y."/>
            <person name="Nagahari K."/>
            <person name="Murakami K."/>
            <person name="Yasuda T."/>
            <person name="Iwayanagi T."/>
            <person name="Wagatsuma M."/>
            <person name="Shiratori A."/>
            <person name="Sudo H."/>
            <person name="Hosoiri T."/>
            <person name="Kaku Y."/>
            <person name="Kodaira H."/>
            <person name="Kondo H."/>
            <person name="Sugawara M."/>
            <person name="Takahashi M."/>
            <person name="Kanda K."/>
            <person name="Yokoi T."/>
            <person name="Furuya T."/>
            <person name="Kikkawa E."/>
            <person name="Omura Y."/>
            <person name="Abe K."/>
            <person name="Kamihara K."/>
            <person name="Katsuta N."/>
            <person name="Sato K."/>
            <person name="Tanikawa M."/>
            <person name="Yamazaki M."/>
            <person name="Ninomiya K."/>
            <person name="Ishibashi T."/>
            <person name="Yamashita H."/>
            <person name="Murakawa K."/>
            <person name="Fujimori K."/>
            <person name="Tanai H."/>
            <person name="Kimata M."/>
            <person name="Watanabe M."/>
            <person name="Hiraoka S."/>
            <person name="Chiba Y."/>
            <person name="Ishida S."/>
            <person name="Ono Y."/>
            <person name="Takiguchi S."/>
            <person name="Watanabe S."/>
            <person name="Yosida M."/>
            <person name="Hotuta T."/>
            <person name="Kusano J."/>
            <person name="Kanehori K."/>
            <person name="Takahashi-Fujii A."/>
            <person name="Hara H."/>
            <person name="Tanase T.-O."/>
            <person name="Nomura Y."/>
            <person name="Togiya S."/>
            <person name="Komai F."/>
            <person name="Hara R."/>
            <person name="Takeuchi K."/>
            <person name="Arita M."/>
            <person name="Imose N."/>
            <person name="Musashino K."/>
            <person name="Yuuki H."/>
            <person name="Oshima A."/>
            <person name="Sasaki N."/>
            <person name="Aotsuka S."/>
            <person name="Yoshikawa Y."/>
            <person name="Matsunawa H."/>
            <person name="Ichihara T."/>
            <person name="Shiohata N."/>
            <person name="Sano S."/>
            <person name="Moriya S."/>
            <person name="Momiyama H."/>
            <person name="Satoh N."/>
            <person name="Takami S."/>
            <person name="Terashima Y."/>
            <person name="Suzuki O."/>
            <person name="Nakagawa S."/>
            <person name="Senoh A."/>
            <person name="Mizoguchi H."/>
            <person name="Goto Y."/>
            <person name="Shimizu F."/>
            <person name="Wakebe H."/>
            <person name="Hishigaki H."/>
            <person name="Watanabe T."/>
            <person name="Sugiyama A."/>
            <person name="Takemoto M."/>
            <person name="Kawakami B."/>
            <person name="Yamazaki M."/>
            <person name="Watanabe K."/>
            <person name="Kumagai A."/>
            <person name="Itakura S."/>
            <person name="Fukuzumi Y."/>
            <person name="Fujimori Y."/>
            <person name="Komiyama M."/>
            <person name="Tashiro H."/>
            <person name="Tanigami A."/>
            <person name="Fujiwara T."/>
            <person name="Ono T."/>
            <person name="Yamada K."/>
            <person name="Fujii Y."/>
            <person name="Ozaki K."/>
            <person name="Hirao M."/>
            <person name="Ohmori Y."/>
            <person name="Kawabata A."/>
            <person name="Hikiji T."/>
            <person name="Kobatake N."/>
            <person name="Inagaki H."/>
            <person name="Ikema Y."/>
            <person name="Okamoto S."/>
            <person name="Okitani R."/>
            <person name="Kawakami T."/>
            <person name="Noguchi S."/>
            <person name="Itoh T."/>
            <person name="Shigeta K."/>
            <person name="Senba T."/>
            <person name="Matsumura K."/>
            <person name="Nakajima Y."/>
            <person name="Mizuno T."/>
            <person name="Morinaga M."/>
            <person name="Sasaki M."/>
            <person name="Togashi T."/>
            <person name="Oyama M."/>
            <person name="Hata H."/>
            <person name="Watanabe M."/>
            <person name="Komatsu T."/>
            <person name="Mizushima-Sugano J."/>
            <person name="Satoh T."/>
            <person name="Shirai Y."/>
            <person name="Takahashi Y."/>
            <person name="Nakagawa K."/>
            <person name="Okumura K."/>
            <person name="Nagase T."/>
            <person name="Nomura N."/>
            <person name="Kikuchi H."/>
            <person name="Masuho Y."/>
            <person name="Yamashita R."/>
            <person name="Nakai K."/>
            <person name="Yada T."/>
            <person name="Nakamura Y."/>
            <person name="Ohara O."/>
            <person name="Isogai T."/>
            <person name="Sugano S."/>
        </authorList>
    </citation>
    <scope>NUCLEOTIDE SEQUENCE [LARGE SCALE MRNA] (ISOFORM 1)</scope>
    <source>
        <tissue>Brain</tissue>
    </source>
</reference>
<reference key="9">
    <citation type="journal article" date="2004" name="Nature">
        <title>The DNA sequence and analysis of human chromosome 13.</title>
        <authorList>
            <person name="Dunham A."/>
            <person name="Matthews L.H."/>
            <person name="Burton J."/>
            <person name="Ashurst J.L."/>
            <person name="Howe K.L."/>
            <person name="Ashcroft K.J."/>
            <person name="Beare D.M."/>
            <person name="Burford D.C."/>
            <person name="Hunt S.E."/>
            <person name="Griffiths-Jones S."/>
            <person name="Jones M.C."/>
            <person name="Keenan S.J."/>
            <person name="Oliver K."/>
            <person name="Scott C.E."/>
            <person name="Ainscough R."/>
            <person name="Almeida J.P."/>
            <person name="Ambrose K.D."/>
            <person name="Andrews D.T."/>
            <person name="Ashwell R.I.S."/>
            <person name="Babbage A.K."/>
            <person name="Bagguley C.L."/>
            <person name="Bailey J."/>
            <person name="Bannerjee R."/>
            <person name="Barlow K.F."/>
            <person name="Bates K."/>
            <person name="Beasley H."/>
            <person name="Bird C.P."/>
            <person name="Bray-Allen S."/>
            <person name="Brown A.J."/>
            <person name="Brown J.Y."/>
            <person name="Burrill W."/>
            <person name="Carder C."/>
            <person name="Carter N.P."/>
            <person name="Chapman J.C."/>
            <person name="Clamp M.E."/>
            <person name="Clark S.Y."/>
            <person name="Clarke G."/>
            <person name="Clee C.M."/>
            <person name="Clegg S.C."/>
            <person name="Cobley V."/>
            <person name="Collins J.E."/>
            <person name="Corby N."/>
            <person name="Coville G.J."/>
            <person name="Deloukas P."/>
            <person name="Dhami P."/>
            <person name="Dunham I."/>
            <person name="Dunn M."/>
            <person name="Earthrowl M.E."/>
            <person name="Ellington A.G."/>
            <person name="Faulkner L."/>
            <person name="Frankish A.G."/>
            <person name="Frankland J."/>
            <person name="French L."/>
            <person name="Garner P."/>
            <person name="Garnett J."/>
            <person name="Gilbert J.G.R."/>
            <person name="Gilson C.J."/>
            <person name="Ghori J."/>
            <person name="Grafham D.V."/>
            <person name="Gribble S.M."/>
            <person name="Griffiths C."/>
            <person name="Hall R.E."/>
            <person name="Hammond S."/>
            <person name="Harley J.L."/>
            <person name="Hart E.A."/>
            <person name="Heath P.D."/>
            <person name="Howden P.J."/>
            <person name="Huckle E.J."/>
            <person name="Hunt P.J."/>
            <person name="Hunt A.R."/>
            <person name="Johnson C."/>
            <person name="Johnson D."/>
            <person name="Kay M."/>
            <person name="Kimberley A.M."/>
            <person name="King A."/>
            <person name="Laird G.K."/>
            <person name="Langford C.J."/>
            <person name="Lawlor S."/>
            <person name="Leongamornlert D.A."/>
            <person name="Lloyd D.M."/>
            <person name="Lloyd C."/>
            <person name="Loveland J.E."/>
            <person name="Lovell J."/>
            <person name="Martin S."/>
            <person name="Mashreghi-Mohammadi M."/>
            <person name="McLaren S.J."/>
            <person name="McMurray A."/>
            <person name="Milne S."/>
            <person name="Moore M.J.F."/>
            <person name="Nickerson T."/>
            <person name="Palmer S.A."/>
            <person name="Pearce A.V."/>
            <person name="Peck A.I."/>
            <person name="Pelan S."/>
            <person name="Phillimore B."/>
            <person name="Porter K.M."/>
            <person name="Rice C.M."/>
            <person name="Searle S."/>
            <person name="Sehra H.K."/>
            <person name="Shownkeen R."/>
            <person name="Skuce C.D."/>
            <person name="Smith M."/>
            <person name="Steward C.A."/>
            <person name="Sycamore N."/>
            <person name="Tester J."/>
            <person name="Thomas D.W."/>
            <person name="Tracey A."/>
            <person name="Tromans A."/>
            <person name="Tubby B."/>
            <person name="Wall M."/>
            <person name="Wallis J.M."/>
            <person name="West A.P."/>
            <person name="Whitehead S.L."/>
            <person name="Willey D.L."/>
            <person name="Wilming L."/>
            <person name="Wray P.W."/>
            <person name="Wright M.W."/>
            <person name="Young L."/>
            <person name="Coulson A."/>
            <person name="Durbin R.M."/>
            <person name="Hubbard T."/>
            <person name="Sulston J.E."/>
            <person name="Beck S."/>
            <person name="Bentley D.R."/>
            <person name="Rogers J."/>
            <person name="Ross M.T."/>
        </authorList>
    </citation>
    <scope>NUCLEOTIDE SEQUENCE [LARGE SCALE GENOMIC DNA]</scope>
    <scope>VARIANT THR-355</scope>
</reference>
<reference key="10">
    <citation type="submission" date="2005-07" db="EMBL/GenBank/DDBJ databases">
        <authorList>
            <person name="Mural R.J."/>
            <person name="Istrail S."/>
            <person name="Sutton G.G."/>
            <person name="Florea L."/>
            <person name="Halpern A.L."/>
            <person name="Mobarry C.M."/>
            <person name="Lippert R."/>
            <person name="Walenz B."/>
            <person name="Shatkay H."/>
            <person name="Dew I."/>
            <person name="Miller J.R."/>
            <person name="Flanigan M.J."/>
            <person name="Edwards N.J."/>
            <person name="Bolanos R."/>
            <person name="Fasulo D."/>
            <person name="Halldorsson B.V."/>
            <person name="Hannenhalli S."/>
            <person name="Turner R."/>
            <person name="Yooseph S."/>
            <person name="Lu F."/>
            <person name="Nusskern D.R."/>
            <person name="Shue B.C."/>
            <person name="Zheng X.H."/>
            <person name="Zhong F."/>
            <person name="Delcher A.L."/>
            <person name="Huson D.H."/>
            <person name="Kravitz S.A."/>
            <person name="Mouchard L."/>
            <person name="Reinert K."/>
            <person name="Remington K.A."/>
            <person name="Clark A.G."/>
            <person name="Waterman M.S."/>
            <person name="Eichler E.E."/>
            <person name="Adams M.D."/>
            <person name="Hunkapiller M.W."/>
            <person name="Myers E.W."/>
            <person name="Venter J.C."/>
        </authorList>
    </citation>
    <scope>NUCLEOTIDE SEQUENCE [LARGE SCALE GENOMIC DNA]</scope>
</reference>
<reference key="11">
    <citation type="journal article" date="2004" name="Genome Res.">
        <title>The status, quality, and expansion of the NIH full-length cDNA project: the Mammalian Gene Collection (MGC).</title>
        <authorList>
            <consortium name="The MGC Project Team"/>
        </authorList>
    </citation>
    <scope>NUCLEOTIDE SEQUENCE [LARGE SCALE MRNA] (ISOFORM 1)</scope>
    <source>
        <tissue>Blood</tissue>
        <tissue>Lung</tissue>
    </source>
</reference>
<reference key="12">
    <citation type="journal article" date="2007" name="Mol. Biol. Cell">
        <title>The RBCC gene RFP2 (Leu5) encodes a novel transmembrane E3 ubiquitin ligase involved in ERAD.</title>
        <authorList>
            <person name="Lerner M."/>
            <person name="Corcoran M."/>
            <person name="Cepeda D."/>
            <person name="Nielsen M.L."/>
            <person name="Zubarev R."/>
            <person name="Ponten F."/>
            <person name="Uhlen M."/>
            <person name="Hober S."/>
            <person name="Grander D."/>
            <person name="Sangfelt O."/>
        </authorList>
    </citation>
    <scope>FUNCTION AS AN E3 UBIQUITIN LIGASE</scope>
    <scope>AUTOUBIQUITINATION</scope>
    <scope>SUBCELLULAR LOCATION</scope>
    <scope>MUTAGENESIS OF CYS-13</scope>
    <scope>IDENTIFICATION BY MASS SPECTROMETRY</scope>
    <scope>INTERACTION WITH VCP</scope>
</reference>
<reference key="13">
    <citation type="journal article" date="2011" name="Eur. J. Cell Biol.">
        <title>Ret finger protein 2 enhances ionizing radiation-induced apoptosis via degradation of AKT and MDM2.</title>
        <authorList>
            <person name="Joo H.M."/>
            <person name="Kim J.Y."/>
            <person name="Jeong J.B."/>
            <person name="Seong K.M."/>
            <person name="Nam S.Y."/>
            <person name="Yang K.H."/>
            <person name="Kim C.S."/>
            <person name="Kim H.S."/>
            <person name="Jeong M."/>
            <person name="An S."/>
            <person name="Jin Y.W."/>
        </authorList>
    </citation>
    <scope>FUNCTION AS AN E3 UBIQUITIN LIGASE</scope>
    <scope>AUTOUBIQUITINATION</scope>
    <scope>SUBCELLULAR LOCATION</scope>
    <scope>MUTAGENESIS OF CYS-13</scope>
    <scope>IDENTIFICATION BY MASS SPECTROMETRY</scope>
    <scope>INTERACTION WITH MDM2 AND AKT1</scope>
</reference>
<reference key="14">
    <citation type="journal article" date="2012" name="Biochim. Biophys. Acta">
        <title>TRIM13 regulates ER stress induced autophagy and clonogenic ability of the cells.</title>
        <authorList>
            <person name="Tomar D."/>
            <person name="Singh R."/>
            <person name="Singh A.K."/>
            <person name="Pandya C.D."/>
            <person name="Singh R."/>
        </authorList>
    </citation>
    <scope>FUNCTION</scope>
    <scope>AUTOUBIQUITINATION</scope>
    <scope>SUBCELLULAR LOCATION</scope>
    <scope>MUTAGENESIS OF CYS-13</scope>
    <scope>INTERACTION WITH SQSTM1</scope>
</reference>
<reference key="15">
    <citation type="journal article" date="2014" name="Cell. Signal.">
        <title>TRIM13 regulates ubiquitination and turnover of NEMO to suppress TNF induced NF-kappaB activation.</title>
        <authorList>
            <person name="Tomar D."/>
            <person name="Singh R."/>
        </authorList>
    </citation>
    <scope>FUNCTION</scope>
    <scope>SUBCELLULAR LOCATION</scope>
    <scope>INTERACTION WITH IKBKG</scope>
</reference>
<reference key="16">
    <citation type="journal article" date="2014" name="Int. J. Biochem. Cell Biol.">
        <title>Participation of the E3-ligase TRIM13 in NF-kappaB p65 activation and NFAT-dependent activation of c-Rel upon T-cell receptor engagement.</title>
        <authorList>
            <person name="Hatchi E.M."/>
            <person name="Poalas K."/>
            <person name="Cordeiro N."/>
            <person name="N'Debi M."/>
            <person name="Gavard J."/>
            <person name="Bidere N."/>
        </authorList>
    </citation>
    <scope>FUNCTION</scope>
</reference>
<reference key="17">
    <citation type="journal article" date="2017" name="Mol. Pharmacol.">
        <title>Trim13 potentiates toll-like receptor 2-mediated nuclear factor kappaB activation via K29-linked polyubiquitination of tumor necrosis factor receptor-associated factor 6.</title>
        <authorList>
            <person name="Huang B."/>
            <person name="Baek S.H."/>
        </authorList>
    </citation>
    <scope>FUNCTION</scope>
    <scope>INTERACTION WITH TRAF6</scope>
</reference>
<proteinExistence type="evidence at protein level"/>
<name>TRI13_HUMAN</name>
<dbReference type="EC" id="2.3.2.27"/>
<dbReference type="EMBL" id="AJ224819">
    <property type="protein sequence ID" value="CAA12136.1"/>
    <property type="molecule type" value="mRNA"/>
</dbReference>
<dbReference type="EMBL" id="AF279660">
    <property type="protein sequence ID" value="AAK13059.1"/>
    <property type="molecule type" value="Genomic_DNA"/>
</dbReference>
<dbReference type="EMBL" id="AF220127">
    <property type="protein sequence ID" value="AAG53500.1"/>
    <property type="molecule type" value="mRNA"/>
</dbReference>
<dbReference type="EMBL" id="AF220128">
    <property type="protein sequence ID" value="AAG53501.1"/>
    <property type="molecule type" value="mRNA"/>
</dbReference>
<dbReference type="EMBL" id="AY191002">
    <property type="protein sequence ID" value="AAO38979.1"/>
    <property type="molecule type" value="mRNA"/>
</dbReference>
<dbReference type="EMBL" id="AF241849">
    <property type="protein sequence ID" value="AAK51624.1"/>
    <property type="molecule type" value="Genomic_DNA"/>
</dbReference>
<dbReference type="EMBL" id="AF241850">
    <property type="protein sequence ID" value="AAF91315.1"/>
    <property type="molecule type" value="mRNA"/>
</dbReference>
<dbReference type="EMBL" id="AY455758">
    <property type="protein sequence ID" value="AAR31110.1"/>
    <property type="molecule type" value="mRNA"/>
</dbReference>
<dbReference type="EMBL" id="AY764035">
    <property type="protein sequence ID" value="AAV51406.1"/>
    <property type="molecule type" value="mRNA"/>
</dbReference>
<dbReference type="EMBL" id="AK314496">
    <property type="protein sequence ID" value="BAG37096.1"/>
    <property type="molecule type" value="mRNA"/>
</dbReference>
<dbReference type="EMBL" id="AL137060">
    <property type="status" value="NOT_ANNOTATED_CDS"/>
    <property type="molecule type" value="Genomic_DNA"/>
</dbReference>
<dbReference type="EMBL" id="CH471075">
    <property type="protein sequence ID" value="EAX08844.1"/>
    <property type="molecule type" value="Genomic_DNA"/>
</dbReference>
<dbReference type="EMBL" id="CH471075">
    <property type="protein sequence ID" value="EAX08845.1"/>
    <property type="molecule type" value="Genomic_DNA"/>
</dbReference>
<dbReference type="EMBL" id="BC003579">
    <property type="protein sequence ID" value="AAH03579.1"/>
    <property type="molecule type" value="mRNA"/>
</dbReference>
<dbReference type="EMBL" id="BC063407">
    <property type="protein sequence ID" value="AAH63407.1"/>
    <property type="molecule type" value="mRNA"/>
</dbReference>
<dbReference type="CCDS" id="CCDS41888.1">
    <molecule id="O60858-3"/>
</dbReference>
<dbReference type="CCDS" id="CCDS9423.1">
    <molecule id="O60858-1"/>
</dbReference>
<dbReference type="RefSeq" id="NP_001007279.1">
    <molecule id="O60858-3"/>
    <property type="nucleotide sequence ID" value="NM_001007278.3"/>
</dbReference>
<dbReference type="RefSeq" id="NP_005789.2">
    <molecule id="O60858-1"/>
    <property type="nucleotide sequence ID" value="NM_005798.4"/>
</dbReference>
<dbReference type="RefSeq" id="NP_434698.1">
    <molecule id="O60858-1"/>
    <property type="nucleotide sequence ID" value="NM_052811.4"/>
</dbReference>
<dbReference type="RefSeq" id="NP_998755.1">
    <molecule id="O60858-1"/>
    <property type="nucleotide sequence ID" value="NM_213590.3"/>
</dbReference>
<dbReference type="SMR" id="O60858"/>
<dbReference type="BioGRID" id="115501">
    <property type="interactions" value="160"/>
</dbReference>
<dbReference type="CORUM" id="O60858"/>
<dbReference type="FunCoup" id="O60858">
    <property type="interactions" value="1157"/>
</dbReference>
<dbReference type="IntAct" id="O60858">
    <property type="interactions" value="38"/>
</dbReference>
<dbReference type="MINT" id="O60858"/>
<dbReference type="STRING" id="9606.ENSP00000348299"/>
<dbReference type="DrugBank" id="DB01565">
    <property type="generic name" value="Dihydromorphine"/>
</dbReference>
<dbReference type="DrugBank" id="DB01548">
    <property type="generic name" value="Diprenorphine"/>
</dbReference>
<dbReference type="DrugBank" id="DB01497">
    <property type="generic name" value="Etorphine"/>
</dbReference>
<dbReference type="GlyGen" id="O60858">
    <property type="glycosylation" value="2 sites, 2 N-linked glycans (1 site), 1 O-linked glycan (1 site)"/>
</dbReference>
<dbReference type="iPTMnet" id="O60858"/>
<dbReference type="PhosphoSitePlus" id="O60858"/>
<dbReference type="BioMuta" id="TRIM13"/>
<dbReference type="jPOST" id="O60858"/>
<dbReference type="MassIVE" id="O60858"/>
<dbReference type="PaxDb" id="9606-ENSP00000348299"/>
<dbReference type="PeptideAtlas" id="O60858"/>
<dbReference type="ProteomicsDB" id="49630">
    <molecule id="O60858-1"/>
</dbReference>
<dbReference type="ProteomicsDB" id="49631">
    <molecule id="O60858-2"/>
</dbReference>
<dbReference type="ProteomicsDB" id="49632">
    <molecule id="O60858-3"/>
</dbReference>
<dbReference type="Pumba" id="O60858"/>
<dbReference type="Antibodypedia" id="638">
    <property type="antibodies" value="237 antibodies from 27 providers"/>
</dbReference>
<dbReference type="DNASU" id="10206"/>
<dbReference type="Ensembl" id="ENST00000356017.8">
    <molecule id="O60858-3"/>
    <property type="protein sequence ID" value="ENSP00000348299.4"/>
    <property type="gene ID" value="ENSG00000204977.10"/>
</dbReference>
<dbReference type="Ensembl" id="ENST00000378182.4">
    <molecule id="O60858-1"/>
    <property type="protein sequence ID" value="ENSP00000367424.3"/>
    <property type="gene ID" value="ENSG00000204977.10"/>
</dbReference>
<dbReference type="Ensembl" id="ENST00000420995.6">
    <molecule id="O60858-1"/>
    <property type="protein sequence ID" value="ENSP00000412943.2"/>
    <property type="gene ID" value="ENSG00000204977.10"/>
</dbReference>
<dbReference type="Ensembl" id="ENST00000457662.2">
    <molecule id="O60858-1"/>
    <property type="protein sequence ID" value="ENSP00000399206.2"/>
    <property type="gene ID" value="ENSG00000204977.10"/>
</dbReference>
<dbReference type="GeneID" id="10206"/>
<dbReference type="KEGG" id="hsa:10206"/>
<dbReference type="MANE-Select" id="ENST00000378182.4">
    <property type="protein sequence ID" value="ENSP00000367424.3"/>
    <property type="RefSeq nucleotide sequence ID" value="NM_213590.3"/>
    <property type="RefSeq protein sequence ID" value="NP_998755.1"/>
</dbReference>
<dbReference type="UCSC" id="uc001vdp.2">
    <molecule id="O60858-1"/>
    <property type="organism name" value="human"/>
</dbReference>
<dbReference type="AGR" id="HGNC:9976"/>
<dbReference type="CTD" id="10206"/>
<dbReference type="DisGeNET" id="10206"/>
<dbReference type="GeneCards" id="TRIM13"/>
<dbReference type="HGNC" id="HGNC:9976">
    <property type="gene designation" value="TRIM13"/>
</dbReference>
<dbReference type="HPA" id="ENSG00000204977">
    <property type="expression patterns" value="Low tissue specificity"/>
</dbReference>
<dbReference type="MIM" id="605661">
    <property type="type" value="gene"/>
</dbReference>
<dbReference type="neXtProt" id="NX_O60858"/>
<dbReference type="OpenTargets" id="ENSG00000204977"/>
<dbReference type="PharmGKB" id="PA162406947"/>
<dbReference type="VEuPathDB" id="HostDB:ENSG00000204977"/>
<dbReference type="eggNOG" id="KOG2177">
    <property type="taxonomic scope" value="Eukaryota"/>
</dbReference>
<dbReference type="GeneTree" id="ENSGT00940000159715"/>
<dbReference type="InParanoid" id="O60858"/>
<dbReference type="OMA" id="WRQSPFK"/>
<dbReference type="OrthoDB" id="6105938at2759"/>
<dbReference type="PAN-GO" id="O60858">
    <property type="GO annotations" value="8 GO annotations based on evolutionary models"/>
</dbReference>
<dbReference type="PhylomeDB" id="O60858"/>
<dbReference type="TreeFam" id="TF331669"/>
<dbReference type="PathwayCommons" id="O60858"/>
<dbReference type="Reactome" id="R-HSA-901032">
    <property type="pathway name" value="ER Quality Control Compartment (ERQC)"/>
</dbReference>
<dbReference type="SignaLink" id="O60858"/>
<dbReference type="SIGNOR" id="O60858"/>
<dbReference type="UniPathway" id="UPA00143"/>
<dbReference type="BioGRID-ORCS" id="10206">
    <property type="hits" value="8 hits in 1193 CRISPR screens"/>
</dbReference>
<dbReference type="ChiTaRS" id="TRIM13">
    <property type="organism name" value="human"/>
</dbReference>
<dbReference type="GenomeRNAi" id="10206"/>
<dbReference type="Pharos" id="O60858">
    <property type="development level" value="Tbio"/>
</dbReference>
<dbReference type="PRO" id="PR:O60858"/>
<dbReference type="Proteomes" id="UP000005640">
    <property type="component" value="Chromosome 13"/>
</dbReference>
<dbReference type="RNAct" id="O60858">
    <property type="molecule type" value="protein"/>
</dbReference>
<dbReference type="Bgee" id="ENSG00000204977">
    <property type="expression patterns" value="Expressed in sperm and 207 other cell types or tissues"/>
</dbReference>
<dbReference type="ExpressionAtlas" id="O60858">
    <property type="expression patterns" value="baseline and differential"/>
</dbReference>
<dbReference type="GO" id="GO:0005737">
    <property type="term" value="C:cytoplasm"/>
    <property type="evidence" value="ECO:0000314"/>
    <property type="project" value="UniProtKB"/>
</dbReference>
<dbReference type="GO" id="GO:0005789">
    <property type="term" value="C:endoplasmic reticulum membrane"/>
    <property type="evidence" value="ECO:0000314"/>
    <property type="project" value="UniProtKB"/>
</dbReference>
<dbReference type="GO" id="GO:0044322">
    <property type="term" value="C:endoplasmic reticulum quality control compartment"/>
    <property type="evidence" value="ECO:0007669"/>
    <property type="project" value="GOC"/>
</dbReference>
<dbReference type="GO" id="GO:0097038">
    <property type="term" value="C:perinuclear endoplasmic reticulum"/>
    <property type="evidence" value="ECO:0000314"/>
    <property type="project" value="UniProtKB"/>
</dbReference>
<dbReference type="GO" id="GO:0003713">
    <property type="term" value="F:transcription coactivator activity"/>
    <property type="evidence" value="ECO:0000314"/>
    <property type="project" value="ARUK-UCL"/>
</dbReference>
<dbReference type="GO" id="GO:0061630">
    <property type="term" value="F:ubiquitin protein ligase activity"/>
    <property type="evidence" value="ECO:0000318"/>
    <property type="project" value="GO_Central"/>
</dbReference>
<dbReference type="GO" id="GO:0061659">
    <property type="term" value="F:ubiquitin-like protein ligase activity"/>
    <property type="evidence" value="ECO:0000314"/>
    <property type="project" value="UniProtKB"/>
</dbReference>
<dbReference type="GO" id="GO:0004842">
    <property type="term" value="F:ubiquitin-protein transferase activity"/>
    <property type="evidence" value="ECO:0000314"/>
    <property type="project" value="UniProtKB"/>
</dbReference>
<dbReference type="GO" id="GO:0008270">
    <property type="term" value="F:zinc ion binding"/>
    <property type="evidence" value="ECO:0007669"/>
    <property type="project" value="UniProtKB-KW"/>
</dbReference>
<dbReference type="GO" id="GO:0009653">
    <property type="term" value="P:anatomical structure morphogenesis"/>
    <property type="evidence" value="ECO:0000304"/>
    <property type="project" value="ProtInc"/>
</dbReference>
<dbReference type="GO" id="GO:1904380">
    <property type="term" value="P:endoplasmic reticulum mannose trimming"/>
    <property type="evidence" value="ECO:0000304"/>
    <property type="project" value="Reactome"/>
</dbReference>
<dbReference type="GO" id="GO:0036503">
    <property type="term" value="P:ERAD pathway"/>
    <property type="evidence" value="ECO:0000314"/>
    <property type="project" value="UniProtKB"/>
</dbReference>
<dbReference type="GO" id="GO:0045087">
    <property type="term" value="P:innate immune response"/>
    <property type="evidence" value="ECO:0000314"/>
    <property type="project" value="UniProtKB"/>
</dbReference>
<dbReference type="GO" id="GO:0032897">
    <property type="term" value="P:negative regulation of viral transcription"/>
    <property type="evidence" value="ECO:0000314"/>
    <property type="project" value="UniProtKB"/>
</dbReference>
<dbReference type="GO" id="GO:0043123">
    <property type="term" value="P:positive regulation of canonical NF-kappaB signal transduction"/>
    <property type="evidence" value="ECO:0000314"/>
    <property type="project" value="UniProtKB"/>
</dbReference>
<dbReference type="GO" id="GO:0016239">
    <property type="term" value="P:positive regulation of macroautophagy"/>
    <property type="evidence" value="ECO:0000314"/>
    <property type="project" value="UniProtKB"/>
</dbReference>
<dbReference type="GO" id="GO:0051092">
    <property type="term" value="P:positive regulation of NF-kappaB transcription factor activity"/>
    <property type="evidence" value="ECO:0000315"/>
    <property type="project" value="UniProtKB"/>
</dbReference>
<dbReference type="GO" id="GO:0043161">
    <property type="term" value="P:proteasome-mediated ubiquitin-dependent protein catabolic process"/>
    <property type="evidence" value="ECO:0000314"/>
    <property type="project" value="UniProtKB"/>
</dbReference>
<dbReference type="GO" id="GO:0051865">
    <property type="term" value="P:protein autoubiquitination"/>
    <property type="evidence" value="ECO:0000314"/>
    <property type="project" value="UniProtKB"/>
</dbReference>
<dbReference type="GO" id="GO:0044790">
    <property type="term" value="P:suppression of viral release by host"/>
    <property type="evidence" value="ECO:0000314"/>
    <property type="project" value="UniProtKB"/>
</dbReference>
<dbReference type="CDD" id="cd19767">
    <property type="entry name" value="Bbox2_TRIM13_C-XI"/>
    <property type="match status" value="1"/>
</dbReference>
<dbReference type="CDD" id="cd16762">
    <property type="entry name" value="RING-HC_TRIM13_C-V"/>
    <property type="match status" value="1"/>
</dbReference>
<dbReference type="FunFam" id="3.30.160.60:FF:001362">
    <property type="entry name" value="E3 ubiquitin-protein ligase TRIM13"/>
    <property type="match status" value="1"/>
</dbReference>
<dbReference type="Gene3D" id="3.30.160.60">
    <property type="entry name" value="Classic Zinc Finger"/>
    <property type="match status" value="1"/>
</dbReference>
<dbReference type="Gene3D" id="3.30.40.10">
    <property type="entry name" value="Zinc/RING finger domain, C3HC4 (zinc finger)"/>
    <property type="match status" value="1"/>
</dbReference>
<dbReference type="InterPro" id="IPR050143">
    <property type="entry name" value="TRIM/RBCC"/>
</dbReference>
<dbReference type="InterPro" id="IPR027370">
    <property type="entry name" value="Znf-RING_euk"/>
</dbReference>
<dbReference type="InterPro" id="IPR000315">
    <property type="entry name" value="Znf_B-box"/>
</dbReference>
<dbReference type="InterPro" id="IPR001841">
    <property type="entry name" value="Znf_RING"/>
</dbReference>
<dbReference type="InterPro" id="IPR013083">
    <property type="entry name" value="Znf_RING/FYVE/PHD"/>
</dbReference>
<dbReference type="InterPro" id="IPR017907">
    <property type="entry name" value="Znf_RING_CS"/>
</dbReference>
<dbReference type="PANTHER" id="PTHR24103">
    <property type="entry name" value="E3 UBIQUITIN-PROTEIN LIGASE TRIM"/>
    <property type="match status" value="1"/>
</dbReference>
<dbReference type="Pfam" id="PF00643">
    <property type="entry name" value="zf-B_box"/>
    <property type="match status" value="1"/>
</dbReference>
<dbReference type="Pfam" id="PF13445">
    <property type="entry name" value="zf-RING_UBOX"/>
    <property type="match status" value="1"/>
</dbReference>
<dbReference type="SMART" id="SM00336">
    <property type="entry name" value="BBOX"/>
    <property type="match status" value="1"/>
</dbReference>
<dbReference type="SMART" id="SM00184">
    <property type="entry name" value="RING"/>
    <property type="match status" value="1"/>
</dbReference>
<dbReference type="SUPFAM" id="SSF57845">
    <property type="entry name" value="B-box zinc-binding domain"/>
    <property type="match status" value="1"/>
</dbReference>
<dbReference type="SUPFAM" id="SSF57850">
    <property type="entry name" value="RING/U-box"/>
    <property type="match status" value="1"/>
</dbReference>
<dbReference type="PROSITE" id="PS50119">
    <property type="entry name" value="ZF_BBOX"/>
    <property type="match status" value="1"/>
</dbReference>
<dbReference type="PROSITE" id="PS00518">
    <property type="entry name" value="ZF_RING_1"/>
    <property type="match status" value="1"/>
</dbReference>
<dbReference type="PROSITE" id="PS50089">
    <property type="entry name" value="ZF_RING_2"/>
    <property type="match status" value="1"/>
</dbReference>
<feature type="chain" id="PRO_0000056028" description="E3 ubiquitin-protein ligase TRIM13">
    <location>
        <begin position="1"/>
        <end position="407"/>
    </location>
</feature>
<feature type="transmembrane region" description="Helical" evidence="1">
    <location>
        <begin position="317"/>
        <end position="337"/>
    </location>
</feature>
<feature type="zinc finger region" description="RING-type" evidence="3">
    <location>
        <begin position="10"/>
        <end position="58"/>
    </location>
</feature>
<feature type="zinc finger region" description="B box-type" evidence="2">
    <location>
        <begin position="89"/>
        <end position="131"/>
    </location>
</feature>
<feature type="coiled-coil region" evidence="1">
    <location>
        <begin position="172"/>
        <end position="200"/>
    </location>
</feature>
<feature type="binding site" evidence="2">
    <location>
        <position position="94"/>
    </location>
    <ligand>
        <name>Zn(2+)</name>
        <dbReference type="ChEBI" id="CHEBI:29105"/>
    </ligand>
</feature>
<feature type="binding site" evidence="2">
    <location>
        <position position="97"/>
    </location>
    <ligand>
        <name>Zn(2+)</name>
        <dbReference type="ChEBI" id="CHEBI:29105"/>
    </ligand>
</feature>
<feature type="binding site" evidence="2">
    <location>
        <position position="117"/>
    </location>
    <ligand>
        <name>Zn(2+)</name>
        <dbReference type="ChEBI" id="CHEBI:29105"/>
    </ligand>
</feature>
<feature type="binding site" evidence="2">
    <location>
        <position position="123"/>
    </location>
    <ligand>
        <name>Zn(2+)</name>
        <dbReference type="ChEBI" id="CHEBI:29105"/>
    </ligand>
</feature>
<feature type="splice variant" id="VSP_038142" description="In isoform 3." evidence="15">
    <original>M</original>
    <variation>MDVM</variation>
    <location>
        <position position="1"/>
    </location>
</feature>
<feature type="splice variant" id="VSP_005746" description="In isoform 2." evidence="14">
    <original>L</original>
    <variation>D</variation>
    <location>
        <position position="175"/>
    </location>
</feature>
<feature type="splice variant" id="VSP_005747" description="In isoform 2." evidence="14">
    <location>
        <begin position="176"/>
        <end position="407"/>
    </location>
</feature>
<feature type="sequence variant" id="VAR_013512" description="In dbSNP:rs1056543." evidence="4 5 12 13">
    <original>S</original>
    <variation>T</variation>
    <location>
        <position position="355"/>
    </location>
</feature>
<feature type="mutagenesis site" description="Absence of polyubiquitination. Stability of protein increased. No enhanced apoptosis on ionizing radiation induction. No ubiquitination of AKT1 or MDM2. Decreased p53/TP53 stability. No effect on induction of autophagy during ER stress." evidence="6 7 8">
    <original>C</original>
    <variation>A</variation>
    <location>
        <position position="13"/>
    </location>
</feature>